<feature type="chain" id="PRO_0000343280" description="NAD(P)H-quinone oxidoreductase chain 4, chloroplastic">
    <location>
        <begin position="1"/>
        <end position="500"/>
    </location>
</feature>
<feature type="transmembrane region" description="Helical" evidence="2">
    <location>
        <begin position="4"/>
        <end position="24"/>
    </location>
</feature>
<feature type="transmembrane region" description="Helical" evidence="2">
    <location>
        <begin position="35"/>
        <end position="55"/>
    </location>
</feature>
<feature type="transmembrane region" description="Helical" evidence="2">
    <location>
        <begin position="87"/>
        <end position="107"/>
    </location>
</feature>
<feature type="transmembrane region" description="Helical" evidence="2">
    <location>
        <begin position="134"/>
        <end position="154"/>
    </location>
</feature>
<feature type="transmembrane region" description="Helical" evidence="2">
    <location>
        <begin position="167"/>
        <end position="187"/>
    </location>
</feature>
<feature type="transmembrane region" description="Helical" evidence="2">
    <location>
        <begin position="211"/>
        <end position="231"/>
    </location>
</feature>
<feature type="transmembrane region" description="Helical" evidence="2">
    <location>
        <begin position="242"/>
        <end position="262"/>
    </location>
</feature>
<feature type="transmembrane region" description="Helical" evidence="2">
    <location>
        <begin position="272"/>
        <end position="292"/>
    </location>
</feature>
<feature type="transmembrane region" description="Helical" evidence="2">
    <location>
        <begin position="305"/>
        <end position="325"/>
    </location>
</feature>
<feature type="transmembrane region" description="Helical" evidence="2">
    <location>
        <begin position="330"/>
        <end position="350"/>
    </location>
</feature>
<feature type="transmembrane region" description="Helical" evidence="2">
    <location>
        <begin position="386"/>
        <end position="406"/>
    </location>
</feature>
<feature type="transmembrane region" description="Helical" evidence="2">
    <location>
        <begin position="416"/>
        <end position="436"/>
    </location>
</feature>
<feature type="transmembrane region" description="Helical" evidence="2">
    <location>
        <begin position="462"/>
        <end position="482"/>
    </location>
</feature>
<evidence type="ECO:0000250" key="1"/>
<evidence type="ECO:0000255" key="2">
    <source>
        <dbReference type="HAMAP-Rule" id="MF_00491"/>
    </source>
</evidence>
<reference key="1">
    <citation type="submission" date="2007-03" db="EMBL/GenBank/DDBJ databases">
        <title>Sequencing analysis of Crucihimalaya wallichii chloroplast DNA.</title>
        <authorList>
            <person name="Hosouchi T."/>
            <person name="Tsuruoka H."/>
            <person name="Kotani H."/>
        </authorList>
    </citation>
    <scope>NUCLEOTIDE SEQUENCE [LARGE SCALE GENOMIC DNA]</scope>
</reference>
<sequence>MNDFPWLTIIVVFPISAGSLMLFLPHRGNKVNKWYTISICILELLLTTYAFCYNFKMDDPLIQLSEDYKWINFCDFYWRMGIDGLSIGTILLTGFITTLATLAAFPVTRDSRLFHFLMLAMYSGQIGSFSSRDLLLFFIMWELELIPVYHLLSMWGGKKRLYSATKFILYTAGSSIFLLIGVLGISLYGSNEPTLNLELLANQSYPVTLEILFYIGFLIAFAVKSPIIPLHTWLPDTHGEAHYSTCMLLAGILLKMGAYGLVRINMELLPHAHSMFSPWLMVVGTIQIIYAASTSPGQRNLKKRIAYSSVSHMGFIIIGISSITDPGLNGAILQIISHGFIGAALFFLAGTSYDRIRLVYLDEMGGMAISIPKIFTMFTILSMASLALPGMSGFVAELIVFFGIITSQKYFVISKIFIIFVMAIGMILTPIYLLSMSRQMFYGYKLINVKNFSFFDSGPRELFLSISILLPIIGIGIYPDFVLSLASDKVESILSNYFYG</sequence>
<name>NU4C_CRUWA</name>
<protein>
    <recommendedName>
        <fullName evidence="2">NAD(P)H-quinone oxidoreductase chain 4, chloroplastic</fullName>
        <ecNumber evidence="2">7.1.1.-</ecNumber>
    </recommendedName>
    <alternativeName>
        <fullName evidence="2">NAD(P)H dehydrogenase, chain 4</fullName>
    </alternativeName>
    <alternativeName>
        <fullName evidence="2">NADH-plastoquinone oxidoreductase chain 4</fullName>
    </alternativeName>
</protein>
<dbReference type="EC" id="7.1.1.-" evidence="2"/>
<dbReference type="EMBL" id="AP009372">
    <property type="protein sequence ID" value="BAF50339.1"/>
    <property type="status" value="ALT_SEQ"/>
    <property type="molecule type" value="Genomic_DNA"/>
</dbReference>
<dbReference type="RefSeq" id="YP_001123514.2">
    <property type="nucleotide sequence ID" value="NC_009271.1"/>
</dbReference>
<dbReference type="SMR" id="A4QKY4"/>
<dbReference type="GeneID" id="4962685"/>
<dbReference type="GO" id="GO:0009535">
    <property type="term" value="C:chloroplast thylakoid membrane"/>
    <property type="evidence" value="ECO:0007669"/>
    <property type="project" value="UniProtKB-SubCell"/>
</dbReference>
<dbReference type="GO" id="GO:0008137">
    <property type="term" value="F:NADH dehydrogenase (ubiquinone) activity"/>
    <property type="evidence" value="ECO:0007669"/>
    <property type="project" value="InterPro"/>
</dbReference>
<dbReference type="GO" id="GO:0048039">
    <property type="term" value="F:ubiquinone binding"/>
    <property type="evidence" value="ECO:0007669"/>
    <property type="project" value="TreeGrafter"/>
</dbReference>
<dbReference type="GO" id="GO:0042773">
    <property type="term" value="P:ATP synthesis coupled electron transport"/>
    <property type="evidence" value="ECO:0007669"/>
    <property type="project" value="InterPro"/>
</dbReference>
<dbReference type="GO" id="GO:0015990">
    <property type="term" value="P:electron transport coupled proton transport"/>
    <property type="evidence" value="ECO:0007669"/>
    <property type="project" value="TreeGrafter"/>
</dbReference>
<dbReference type="HAMAP" id="MF_00491">
    <property type="entry name" value="NDH1_NuoM"/>
    <property type="match status" value="1"/>
</dbReference>
<dbReference type="InterPro" id="IPR022997">
    <property type="entry name" value="NADH_Q_OxRdtase_chain4"/>
</dbReference>
<dbReference type="InterPro" id="IPR010227">
    <property type="entry name" value="NADH_Q_OxRdtase_chainM/4"/>
</dbReference>
<dbReference type="InterPro" id="IPR003918">
    <property type="entry name" value="NADH_UbQ_OxRdtase"/>
</dbReference>
<dbReference type="InterPro" id="IPR001750">
    <property type="entry name" value="ND/Mrp_TM"/>
</dbReference>
<dbReference type="NCBIfam" id="TIGR01972">
    <property type="entry name" value="NDH_I_M"/>
    <property type="match status" value="1"/>
</dbReference>
<dbReference type="PANTHER" id="PTHR43507:SF21">
    <property type="entry name" value="NAD(P)H-QUINONE OXIDOREDUCTASE CHAIN 4, CHLOROPLASTIC"/>
    <property type="match status" value="1"/>
</dbReference>
<dbReference type="PANTHER" id="PTHR43507">
    <property type="entry name" value="NADH-UBIQUINONE OXIDOREDUCTASE CHAIN 4"/>
    <property type="match status" value="1"/>
</dbReference>
<dbReference type="Pfam" id="PF00361">
    <property type="entry name" value="Proton_antipo_M"/>
    <property type="match status" value="1"/>
</dbReference>
<dbReference type="PRINTS" id="PR01437">
    <property type="entry name" value="NUOXDRDTASE4"/>
</dbReference>
<organism>
    <name type="scientific">Crucihimalaya wallichii</name>
    <name type="common">Rock-cress</name>
    <name type="synonym">Arabidopsis campestris</name>
    <dbReference type="NCBI Taxonomy" id="78192"/>
    <lineage>
        <taxon>Eukaryota</taxon>
        <taxon>Viridiplantae</taxon>
        <taxon>Streptophyta</taxon>
        <taxon>Embryophyta</taxon>
        <taxon>Tracheophyta</taxon>
        <taxon>Spermatophyta</taxon>
        <taxon>Magnoliopsida</taxon>
        <taxon>eudicotyledons</taxon>
        <taxon>Gunneridae</taxon>
        <taxon>Pentapetalae</taxon>
        <taxon>rosids</taxon>
        <taxon>malvids</taxon>
        <taxon>Brassicales</taxon>
        <taxon>Brassicaceae</taxon>
        <taxon>Crucihimalayeae</taxon>
        <taxon>Crucihimalaya</taxon>
    </lineage>
</organism>
<gene>
    <name evidence="2" type="primary">ndhD</name>
</gene>
<accession>A4QKY4</accession>
<comment type="catalytic activity">
    <reaction evidence="2">
        <text>a plastoquinone + NADH + (n+1) H(+)(in) = a plastoquinol + NAD(+) + n H(+)(out)</text>
        <dbReference type="Rhea" id="RHEA:42608"/>
        <dbReference type="Rhea" id="RHEA-COMP:9561"/>
        <dbReference type="Rhea" id="RHEA-COMP:9562"/>
        <dbReference type="ChEBI" id="CHEBI:15378"/>
        <dbReference type="ChEBI" id="CHEBI:17757"/>
        <dbReference type="ChEBI" id="CHEBI:57540"/>
        <dbReference type="ChEBI" id="CHEBI:57945"/>
        <dbReference type="ChEBI" id="CHEBI:62192"/>
    </reaction>
</comment>
<comment type="catalytic activity">
    <reaction evidence="2">
        <text>a plastoquinone + NADPH + (n+1) H(+)(in) = a plastoquinol + NADP(+) + n H(+)(out)</text>
        <dbReference type="Rhea" id="RHEA:42612"/>
        <dbReference type="Rhea" id="RHEA-COMP:9561"/>
        <dbReference type="Rhea" id="RHEA-COMP:9562"/>
        <dbReference type="ChEBI" id="CHEBI:15378"/>
        <dbReference type="ChEBI" id="CHEBI:17757"/>
        <dbReference type="ChEBI" id="CHEBI:57783"/>
        <dbReference type="ChEBI" id="CHEBI:58349"/>
        <dbReference type="ChEBI" id="CHEBI:62192"/>
    </reaction>
</comment>
<comment type="subcellular location">
    <subcellularLocation>
        <location evidence="2">Plastid</location>
        <location evidence="2">Chloroplast thylakoid membrane</location>
        <topology evidence="2">Multi-pass membrane protein</topology>
    </subcellularLocation>
</comment>
<comment type="RNA editing">
    <location>
        <position position="1" evidence="1"/>
    </location>
    <text evidence="1">The initiator methionine is created by RNA editing.</text>
</comment>
<comment type="similarity">
    <text evidence="2">Belongs to the complex I subunit 4 family.</text>
</comment>
<keyword id="KW-0150">Chloroplast</keyword>
<keyword id="KW-0472">Membrane</keyword>
<keyword id="KW-0520">NAD</keyword>
<keyword id="KW-0521">NADP</keyword>
<keyword id="KW-0934">Plastid</keyword>
<keyword id="KW-0618">Plastoquinone</keyword>
<keyword id="KW-0874">Quinone</keyword>
<keyword id="KW-0691">RNA editing</keyword>
<keyword id="KW-0793">Thylakoid</keyword>
<keyword id="KW-1278">Translocase</keyword>
<keyword id="KW-0812">Transmembrane</keyword>
<keyword id="KW-1133">Transmembrane helix</keyword>
<geneLocation type="chloroplast"/>
<proteinExistence type="inferred from homology"/>